<comment type="function">
    <text evidence="1">Interacts with ToxR and stimulates its activity.</text>
</comment>
<comment type="subunit">
    <text evidence="1">Interacts with the C-terminal periplasmic domain of ToxR, possibly by binding and stabilizing spontaneously forming ToxR dimers.</text>
</comment>
<comment type="subcellular location">
    <subcellularLocation>
        <location>Cell membrane</location>
        <topology>Single-pass membrane protein</topology>
        <orientation>Periplasmic side</orientation>
    </subcellularLocation>
</comment>
<protein>
    <recommendedName>
        <fullName>Transmembrane regulatory protein ToxS</fullName>
    </recommendedName>
</protein>
<sequence>MKIKVASAVLAVSILFSGWLYWGSDLKVEQVLTSNEWQSTMVTVITDNLPDDTVGPLRRVNVESNVKYLPNGDYIRVANIKLFAQGSTAESTINISEKGRWEVSDNYLLVSPSEFKDISSSQSKDFSEAQLRLITQIFKLDAEQSRRIDVVNEKTLLLTSLNHGSTVLFRN</sequence>
<feature type="chain" id="PRO_0000072640" description="Transmembrane regulatory protein ToxS">
    <location>
        <begin position="1"/>
        <end position="171"/>
    </location>
</feature>
<feature type="topological domain" description="Cytoplasmic" evidence="2">
    <location>
        <begin position="1"/>
        <end position="2"/>
    </location>
</feature>
<feature type="transmembrane region" description="Helical" evidence="2">
    <location>
        <begin position="3"/>
        <end position="24"/>
    </location>
</feature>
<feature type="topological domain" description="Periplasmic" evidence="2">
    <location>
        <begin position="25"/>
        <end position="171"/>
    </location>
</feature>
<accession>Q05939</accession>
<accession>Q8VL53</accession>
<accession>Q9K2V2</accession>
<evidence type="ECO:0000250" key="1"/>
<evidence type="ECO:0000255" key="2"/>
<organism>
    <name type="scientific">Vibrio parahaemolyticus serotype O3:K6 (strain RIMD 2210633)</name>
    <dbReference type="NCBI Taxonomy" id="223926"/>
    <lineage>
        <taxon>Bacteria</taxon>
        <taxon>Pseudomonadati</taxon>
        <taxon>Pseudomonadota</taxon>
        <taxon>Gammaproteobacteria</taxon>
        <taxon>Vibrionales</taxon>
        <taxon>Vibrionaceae</taxon>
        <taxon>Vibrio</taxon>
    </lineage>
</organism>
<dbReference type="EMBL" id="L11929">
    <property type="protein sequence ID" value="AAA27577.1"/>
    <property type="molecule type" value="Genomic_DNA"/>
</dbReference>
<dbReference type="EMBL" id="BA000031">
    <property type="protein sequence ID" value="BAC59082.1"/>
    <property type="molecule type" value="Genomic_DNA"/>
</dbReference>
<dbReference type="EMBL" id="AB063111">
    <property type="protein sequence ID" value="BAB79250.1"/>
    <property type="molecule type" value="Genomic_DNA"/>
</dbReference>
<dbReference type="EMBL" id="AB063112">
    <property type="protein sequence ID" value="BAB79252.1"/>
    <property type="molecule type" value="Genomic_DNA"/>
</dbReference>
<dbReference type="EMBL" id="AB063113">
    <property type="protein sequence ID" value="BAB79254.1"/>
    <property type="molecule type" value="Genomic_DNA"/>
</dbReference>
<dbReference type="EMBL" id="AB029903">
    <property type="protein sequence ID" value="BAA89505.1"/>
    <property type="molecule type" value="Genomic_DNA"/>
</dbReference>
<dbReference type="EMBL" id="AB029904">
    <property type="protein sequence ID" value="BAA89507.1"/>
    <property type="molecule type" value="Genomic_DNA"/>
</dbReference>
<dbReference type="EMBL" id="AB029905">
    <property type="protein sequence ID" value="BAA89509.1"/>
    <property type="molecule type" value="Genomic_DNA"/>
</dbReference>
<dbReference type="EMBL" id="AB029906">
    <property type="protein sequence ID" value="BAA89511.1"/>
    <property type="molecule type" value="Genomic_DNA"/>
</dbReference>
<dbReference type="EMBL" id="AB029907">
    <property type="protein sequence ID" value="BAA89513.1"/>
    <property type="molecule type" value="Genomic_DNA"/>
</dbReference>
<dbReference type="EMBL" id="AB029908">
    <property type="protein sequence ID" value="BAA89515.1"/>
    <property type="molecule type" value="Genomic_DNA"/>
</dbReference>
<dbReference type="EMBL" id="AB029909">
    <property type="protein sequence ID" value="BAA89517.1"/>
    <property type="molecule type" value="Genomic_DNA"/>
</dbReference>
<dbReference type="EMBL" id="AB029910">
    <property type="protein sequence ID" value="BAA89519.1"/>
    <property type="molecule type" value="Genomic_DNA"/>
</dbReference>
<dbReference type="EMBL" id="AB029911">
    <property type="protein sequence ID" value="BAA89521.1"/>
    <property type="molecule type" value="Genomic_DNA"/>
</dbReference>
<dbReference type="EMBL" id="AB029912">
    <property type="protein sequence ID" value="BAA89523.1"/>
    <property type="molecule type" value="Genomic_DNA"/>
</dbReference>
<dbReference type="EMBL" id="AB029913">
    <property type="protein sequence ID" value="BAA89525.1"/>
    <property type="molecule type" value="Genomic_DNA"/>
</dbReference>
<dbReference type="EMBL" id="AB029914">
    <property type="protein sequence ID" value="BAA89527.1"/>
    <property type="molecule type" value="Genomic_DNA"/>
</dbReference>
<dbReference type="EMBL" id="AB029915">
    <property type="protein sequence ID" value="BAA89529.1"/>
    <property type="molecule type" value="Genomic_DNA"/>
</dbReference>
<dbReference type="PIR" id="B47125">
    <property type="entry name" value="B47125"/>
</dbReference>
<dbReference type="RefSeq" id="NP_797198.1">
    <property type="nucleotide sequence ID" value="NC_004603.1"/>
</dbReference>
<dbReference type="RefSeq" id="WP_005454545.1">
    <property type="nucleotide sequence ID" value="NC_004603.1"/>
</dbReference>
<dbReference type="PDB" id="8U2F">
    <property type="method" value="X-ray"/>
    <property type="resolution" value="2.00 A"/>
    <property type="chains" value="A/B=24-171"/>
</dbReference>
<dbReference type="PDBsum" id="8U2F"/>
<dbReference type="SMR" id="Q05939"/>
<dbReference type="GeneID" id="1188316"/>
<dbReference type="KEGG" id="vpa:VP0819"/>
<dbReference type="PATRIC" id="fig|223926.6.peg.776"/>
<dbReference type="eggNOG" id="ENOG5031MTT">
    <property type="taxonomic scope" value="Bacteria"/>
</dbReference>
<dbReference type="HOGENOM" id="CLU_127087_0_0_6"/>
<dbReference type="Proteomes" id="UP000002493">
    <property type="component" value="Chromosome 1"/>
</dbReference>
<dbReference type="GO" id="GO:0005886">
    <property type="term" value="C:plasma membrane"/>
    <property type="evidence" value="ECO:0007669"/>
    <property type="project" value="UniProtKB-SubCell"/>
</dbReference>
<dbReference type="InterPro" id="IPR035288">
    <property type="entry name" value="ToxS"/>
</dbReference>
<dbReference type="Pfam" id="PF17323">
    <property type="entry name" value="ToxS"/>
    <property type="match status" value="1"/>
</dbReference>
<reference key="1">
    <citation type="journal article" date="1993" name="J. Bacteriol.">
        <title>Vibrio parahaemolyticus has a homolog of the Vibrio cholerae toxRS operon that mediates environmentally induced regulation of the thermostable direct hemolysin gene.</title>
        <authorList>
            <person name="Lin Z."/>
            <person name="Kumagai K."/>
            <person name="Baba K."/>
            <person name="Mekalanos J.J."/>
            <person name="Nishibuchi M."/>
        </authorList>
    </citation>
    <scope>NUCLEOTIDE SEQUENCE [GENOMIC DNA]</scope>
    <source>
        <strain>AQ3815</strain>
    </source>
</reference>
<reference key="2">
    <citation type="journal article" date="2003" name="Lancet">
        <title>Genome sequence of Vibrio parahaemolyticus: a pathogenic mechanism distinct from that of V. cholerae.</title>
        <authorList>
            <person name="Makino K."/>
            <person name="Oshima K."/>
            <person name="Kurokawa K."/>
            <person name="Yokoyama K."/>
            <person name="Uda T."/>
            <person name="Tagomori K."/>
            <person name="Iijima Y."/>
            <person name="Najima M."/>
            <person name="Nakano M."/>
            <person name="Yamashita A."/>
            <person name="Kubota Y."/>
            <person name="Kimura S."/>
            <person name="Yasunaga T."/>
            <person name="Honda T."/>
            <person name="Shinagawa H."/>
            <person name="Hattori M."/>
            <person name="Iida T."/>
        </authorList>
    </citation>
    <scope>NUCLEOTIDE SEQUENCE [LARGE SCALE GENOMIC DNA]</scope>
    <source>
        <strain>RIMD 2210633</strain>
    </source>
</reference>
<reference key="3">
    <citation type="submission" date="2001-06" db="EMBL/GenBank/DDBJ databases">
        <title>Prevalence of a pandemic clone and its diversity among Vibrio parahaemolyticus strains isolated from the patients with diarrhea in southern Thailand.</title>
        <authorList>
            <person name="Laohaprertthisan V."/>
            <person name="Chowdhury A."/>
            <person name="Kongmuang U."/>
            <person name="Kalnauwakul S."/>
            <person name="Ishibashi M."/>
            <person name="Matsumoto C."/>
            <person name="Nishibuchi V."/>
        </authorList>
    </citation>
    <scope>NUCLEOTIDE SEQUENCE [GENOMIC DNA] OF 1-166</scope>
    <source>
        <strain>VPHY191</strain>
        <strain>VPHY197</strain>
        <strain>VPHY216</strain>
    </source>
</reference>
<reference key="4">
    <citation type="journal article" date="2000" name="J. Clin. Microbiol.">
        <title>Pandemic spread of an O3:K6 clone of Vibrio parahaemolyticus and emergence of related strains evidenced by arbitrarily primed PCR and toxRS sequence analyses.</title>
        <authorList>
            <person name="Matsumoto C."/>
            <person name="Okuda J."/>
            <person name="Ishibashi M."/>
            <person name="Iwanaga M."/>
            <person name="Garg P."/>
            <person name="Rammamurthy T."/>
            <person name="Wong H.-C."/>
            <person name="Depaola A."/>
            <person name="Kim Y.B."/>
            <person name="Albert M.J."/>
            <person name="Nishibuchi M."/>
        </authorList>
    </citation>
    <scope>NUCLEOTIDE SEQUENCE [GENOMIC DNA] OF 1-151</scope>
    <source>
        <strain>AN-16000 / Serotype O1:KUT</strain>
        <strain>AN-5034 / Serotype O4:K68</strain>
        <strain>AN-8917</strain>
        <strain>AQ3810 / Serotype O3:K6</strain>
        <strain>AQ4901 / Serotype O3:K6</strain>
        <strain>ATCC BAA-239 / VP81 / Serotype O3:K6</strain>
        <strain>BE98-2062 / Serotype O3:K6</strain>
        <strain>DOH272 / Serotype O3:K6</strain>
        <strain>FIHES98V14-1 / Serotype O3:K6</strain>
        <strain>JKY-VP6 / Serotype O3:K6</strain>
        <strain>U-5474 / Serotype O3:K6</strain>
        <strain>VP108 / Serotype O3:K6</strain>
        <strain>Y-27669</strain>
    </source>
</reference>
<keyword id="KW-0002">3D-structure</keyword>
<keyword id="KW-1003">Cell membrane</keyword>
<keyword id="KW-0472">Membrane</keyword>
<keyword id="KW-0812">Transmembrane</keyword>
<keyword id="KW-1133">Transmembrane helix</keyword>
<name>TOXS_VIBPA</name>
<proteinExistence type="evidence at protein level"/>
<gene>
    <name type="primary">toxS</name>
    <name type="ordered locus">VP0819</name>
</gene>